<protein>
    <recommendedName>
        <fullName evidence="1">UPF0509 protein KPK_3153</fullName>
    </recommendedName>
</protein>
<sequence>MSDVNAHLLAQRIDTVLDILVAGDYHSAIHNLEILKAELLALAADDAEQKNQPKAPWEI</sequence>
<organism>
    <name type="scientific">Klebsiella pneumoniae (strain 342)</name>
    <dbReference type="NCBI Taxonomy" id="507522"/>
    <lineage>
        <taxon>Bacteria</taxon>
        <taxon>Pseudomonadati</taxon>
        <taxon>Pseudomonadota</taxon>
        <taxon>Gammaproteobacteria</taxon>
        <taxon>Enterobacterales</taxon>
        <taxon>Enterobacteriaceae</taxon>
        <taxon>Klebsiella/Raoultella group</taxon>
        <taxon>Klebsiella</taxon>
        <taxon>Klebsiella pneumoniae complex</taxon>
    </lineage>
</organism>
<proteinExistence type="inferred from homology"/>
<dbReference type="EMBL" id="CP000964">
    <property type="protein sequence ID" value="ACI08176.1"/>
    <property type="molecule type" value="Genomic_DNA"/>
</dbReference>
<dbReference type="KEGG" id="kpe:KPK_3153"/>
<dbReference type="HOGENOM" id="CLU_180697_1_0_6"/>
<dbReference type="BioCyc" id="KPNE507522:GI0B-3140-MONOMER"/>
<dbReference type="Proteomes" id="UP000001734">
    <property type="component" value="Chromosome"/>
</dbReference>
<dbReference type="HAMAP" id="MF_01641">
    <property type="entry name" value="UPF0509"/>
    <property type="match status" value="1"/>
</dbReference>
<dbReference type="InterPro" id="IPR020887">
    <property type="entry name" value="UPF0509"/>
</dbReference>
<dbReference type="NCBIfam" id="NF010179">
    <property type="entry name" value="PRK13658.1"/>
    <property type="match status" value="1"/>
</dbReference>
<dbReference type="Pfam" id="PF23675">
    <property type="entry name" value="YciZ"/>
    <property type="match status" value="1"/>
</dbReference>
<reference key="1">
    <citation type="journal article" date="2008" name="PLoS Genet.">
        <title>Complete genome sequence of the N2-fixing broad host range endophyte Klebsiella pneumoniae 342 and virulence predictions verified in mice.</title>
        <authorList>
            <person name="Fouts D.E."/>
            <person name="Tyler H.L."/>
            <person name="DeBoy R.T."/>
            <person name="Daugherty S."/>
            <person name="Ren Q."/>
            <person name="Badger J.H."/>
            <person name="Durkin A.S."/>
            <person name="Huot H."/>
            <person name="Shrivastava S."/>
            <person name="Kothari S."/>
            <person name="Dodson R.J."/>
            <person name="Mohamoud Y."/>
            <person name="Khouri H."/>
            <person name="Roesch L.F.W."/>
            <person name="Krogfelt K.A."/>
            <person name="Struve C."/>
            <person name="Triplett E.W."/>
            <person name="Methe B.A."/>
        </authorList>
    </citation>
    <scope>NUCLEOTIDE SEQUENCE [LARGE SCALE GENOMIC DNA]</scope>
    <source>
        <strain>342</strain>
    </source>
</reference>
<evidence type="ECO:0000255" key="1">
    <source>
        <dbReference type="HAMAP-Rule" id="MF_01641"/>
    </source>
</evidence>
<gene>
    <name type="ordered locus">KPK_3153</name>
</gene>
<comment type="similarity">
    <text evidence="1">Belongs to the UPF0509 family.</text>
</comment>
<accession>B5XS05</accession>
<name>Y3153_KLEP3</name>
<feature type="chain" id="PRO_1000186851" description="UPF0509 protein KPK_3153">
    <location>
        <begin position="1"/>
        <end position="59"/>
    </location>
</feature>